<comment type="function">
    <text evidence="5">Serine/threonine-protein kinase involved in the positive regulation of brassinosteroid (BR) signaling and plant growth. Mediates BR signal transduction from BRI1 receptor kinase to BSU1 phosphatase. After activation by phosphorylation at Ser-234 by BRI1, CDG1 phosphorylates BSU1 at 'Ser-764' in the phosphatase domain, increasing the ability of BSU1 to inactivate the negative regulator of BR signaling ASK7/BIN2 by dephosphorylation at 'Tyr-200'. The full kinase activity of CDG1 is required for its biological function.</text>
</comment>
<comment type="catalytic activity">
    <reaction evidence="5">
        <text>L-seryl-[protein] + ATP = O-phospho-L-seryl-[protein] + ADP + H(+)</text>
        <dbReference type="Rhea" id="RHEA:17989"/>
        <dbReference type="Rhea" id="RHEA-COMP:9863"/>
        <dbReference type="Rhea" id="RHEA-COMP:11604"/>
        <dbReference type="ChEBI" id="CHEBI:15378"/>
        <dbReference type="ChEBI" id="CHEBI:29999"/>
        <dbReference type="ChEBI" id="CHEBI:30616"/>
        <dbReference type="ChEBI" id="CHEBI:83421"/>
        <dbReference type="ChEBI" id="CHEBI:456216"/>
        <dbReference type="EC" id="2.7.11.1"/>
    </reaction>
</comment>
<comment type="catalytic activity">
    <reaction evidence="5">
        <text>L-threonyl-[protein] + ATP = O-phospho-L-threonyl-[protein] + ADP + H(+)</text>
        <dbReference type="Rhea" id="RHEA:46608"/>
        <dbReference type="Rhea" id="RHEA-COMP:11060"/>
        <dbReference type="Rhea" id="RHEA-COMP:11605"/>
        <dbReference type="ChEBI" id="CHEBI:15378"/>
        <dbReference type="ChEBI" id="CHEBI:30013"/>
        <dbReference type="ChEBI" id="CHEBI:30616"/>
        <dbReference type="ChEBI" id="CHEBI:61977"/>
        <dbReference type="ChEBI" id="CHEBI:456216"/>
        <dbReference type="EC" id="2.7.11.1"/>
    </reaction>
</comment>
<comment type="activity regulation">
    <text evidence="5">Activated by phosphorylation at Ser-234.</text>
</comment>
<comment type="subunit">
    <text evidence="5">Interacts with BSU1, BSL1 and BRI1.</text>
</comment>
<comment type="subcellular location">
    <subcellularLocation>
        <location evidence="5">Cell membrane</location>
        <topology evidence="7">Lipid-anchor</topology>
    </subcellularLocation>
    <text evidence="5">Plasma membrane localization is required for CDG1 to function in BR signaling.</text>
</comment>
<comment type="tissue specificity">
    <text evidence="4 5">Expressed at high levels in the stamen and pollen grains (PubMed:21855796). Expressed at a very low level in vegetative tissues (PubMed:15466232, PubMed:21855796).</text>
</comment>
<comment type="PTM">
    <text evidence="5">Phosphorylated at Ser-44, Ser-47 and Ser-234 by BRI1.</text>
</comment>
<comment type="disruption phenotype">
    <text evidence="4 5">No visible phenotype under normal growth conditions.</text>
</comment>
<comment type="miscellaneous">
    <text evidence="4">The gain of function mutants cdg1-D (T-DNA tagging) show pleiotropic phenotype such as dwarfism, exaggerated leaf epinasty and twisted or spiral growth in hypocotyl, inflorescence stem, and petiole.</text>
</comment>
<comment type="similarity">
    <text evidence="8">Belongs to the protein kinase superfamily. Ser/Thr protein kinase family.</text>
</comment>
<comment type="sequence caution" evidence="8">
    <conflict type="erroneous termination">
        <sequence resource="EMBL-CDS" id="ABK28574"/>
    </conflict>
    <text>Extended C-terminus.</text>
</comment>
<dbReference type="EC" id="2.7.11.1" evidence="5"/>
<dbReference type="EMBL" id="AB099698">
    <property type="protein sequence ID" value="BAC67214.1"/>
    <property type="molecule type" value="mRNA"/>
</dbReference>
<dbReference type="EMBL" id="AB026649">
    <property type="protein sequence ID" value="BAB01076.1"/>
    <property type="molecule type" value="Genomic_DNA"/>
</dbReference>
<dbReference type="EMBL" id="CP002686">
    <property type="protein sequence ID" value="AEE77248.1"/>
    <property type="molecule type" value="Genomic_DNA"/>
</dbReference>
<dbReference type="EMBL" id="DQ446706">
    <property type="protein sequence ID" value="ABE65973.1"/>
    <property type="molecule type" value="mRNA"/>
</dbReference>
<dbReference type="EMBL" id="DQ653109">
    <property type="protein sequence ID" value="ABK28574.1"/>
    <property type="status" value="ALT_SEQ"/>
    <property type="molecule type" value="mRNA"/>
</dbReference>
<dbReference type="RefSeq" id="NP_189330.1">
    <property type="nucleotide sequence ID" value="NM_113608.3"/>
</dbReference>
<dbReference type="SMR" id="Q9LSE1"/>
<dbReference type="BioGRID" id="7642">
    <property type="interactions" value="6"/>
</dbReference>
<dbReference type="FunCoup" id="Q9LSE1">
    <property type="interactions" value="1206"/>
</dbReference>
<dbReference type="STRING" id="3702.Q9LSE1"/>
<dbReference type="GlyGen" id="Q9LSE1">
    <property type="glycosylation" value="2 sites"/>
</dbReference>
<dbReference type="iPTMnet" id="Q9LSE1"/>
<dbReference type="PaxDb" id="3702-AT3G26940.1"/>
<dbReference type="EnsemblPlants" id="AT3G26940.1">
    <property type="protein sequence ID" value="AT3G26940.1"/>
    <property type="gene ID" value="AT3G26940"/>
</dbReference>
<dbReference type="GeneID" id="822312"/>
<dbReference type="Gramene" id="AT3G26940.1">
    <property type="protein sequence ID" value="AT3G26940.1"/>
    <property type="gene ID" value="AT3G26940"/>
</dbReference>
<dbReference type="KEGG" id="ath:AT3G26940"/>
<dbReference type="Araport" id="AT3G26940"/>
<dbReference type="TAIR" id="AT3G26940">
    <property type="gene designation" value="CDG1"/>
</dbReference>
<dbReference type="eggNOG" id="KOG1187">
    <property type="taxonomic scope" value="Eukaryota"/>
</dbReference>
<dbReference type="HOGENOM" id="CLU_000288_21_0_1"/>
<dbReference type="InParanoid" id="Q9LSE1"/>
<dbReference type="OMA" id="HRAEPSN"/>
<dbReference type="OrthoDB" id="4062651at2759"/>
<dbReference type="PhylomeDB" id="Q9LSE1"/>
<dbReference type="PRO" id="PR:Q9LSE1"/>
<dbReference type="Proteomes" id="UP000006548">
    <property type="component" value="Chromosome 3"/>
</dbReference>
<dbReference type="ExpressionAtlas" id="Q9LSE1">
    <property type="expression patterns" value="baseline and differential"/>
</dbReference>
<dbReference type="GO" id="GO:0005886">
    <property type="term" value="C:plasma membrane"/>
    <property type="evidence" value="ECO:0000314"/>
    <property type="project" value="TAIR"/>
</dbReference>
<dbReference type="GO" id="GO:0005524">
    <property type="term" value="F:ATP binding"/>
    <property type="evidence" value="ECO:0007669"/>
    <property type="project" value="UniProtKB-KW"/>
</dbReference>
<dbReference type="GO" id="GO:0004672">
    <property type="term" value="F:protein kinase activity"/>
    <property type="evidence" value="ECO:0000314"/>
    <property type="project" value="TAIR"/>
</dbReference>
<dbReference type="GO" id="GO:0106310">
    <property type="term" value="F:protein serine kinase activity"/>
    <property type="evidence" value="ECO:0007669"/>
    <property type="project" value="RHEA"/>
</dbReference>
<dbReference type="GO" id="GO:0004674">
    <property type="term" value="F:protein serine/threonine kinase activity"/>
    <property type="evidence" value="ECO:0007669"/>
    <property type="project" value="UniProtKB-KW"/>
</dbReference>
<dbReference type="GO" id="GO:0009742">
    <property type="term" value="P:brassinosteroid mediated signaling pathway"/>
    <property type="evidence" value="ECO:0007669"/>
    <property type="project" value="UniProtKB-KW"/>
</dbReference>
<dbReference type="GO" id="GO:1900459">
    <property type="term" value="P:positive regulation of brassinosteroid mediated signaling pathway"/>
    <property type="evidence" value="ECO:0000315"/>
    <property type="project" value="TAIR"/>
</dbReference>
<dbReference type="CDD" id="cd14066">
    <property type="entry name" value="STKc_IRAK"/>
    <property type="match status" value="1"/>
</dbReference>
<dbReference type="FunFam" id="3.30.200.20:FF:000244">
    <property type="entry name" value="Serine/threonine-protein kinase CDL1-like"/>
    <property type="match status" value="1"/>
</dbReference>
<dbReference type="FunFam" id="1.10.510.10:FF:000032">
    <property type="entry name" value="Serine/threonine-protein kinase PBS1"/>
    <property type="match status" value="1"/>
</dbReference>
<dbReference type="Gene3D" id="3.30.200.20">
    <property type="entry name" value="Phosphorylase Kinase, domain 1"/>
    <property type="match status" value="1"/>
</dbReference>
<dbReference type="Gene3D" id="1.10.510.10">
    <property type="entry name" value="Transferase(Phosphotransferase) domain 1"/>
    <property type="match status" value="1"/>
</dbReference>
<dbReference type="InterPro" id="IPR011009">
    <property type="entry name" value="Kinase-like_dom_sf"/>
</dbReference>
<dbReference type="InterPro" id="IPR000719">
    <property type="entry name" value="Prot_kinase_dom"/>
</dbReference>
<dbReference type="InterPro" id="IPR017441">
    <property type="entry name" value="Protein_kinase_ATP_BS"/>
</dbReference>
<dbReference type="InterPro" id="IPR008271">
    <property type="entry name" value="Ser/Thr_kinase_AS"/>
</dbReference>
<dbReference type="PANTHER" id="PTHR47985">
    <property type="entry name" value="OS07G0668900 PROTEIN"/>
    <property type="match status" value="1"/>
</dbReference>
<dbReference type="PANTHER" id="PTHR47985:SF82">
    <property type="entry name" value="SERINE_THREONINE-PROTEIN KINASE CDG1"/>
    <property type="match status" value="1"/>
</dbReference>
<dbReference type="Pfam" id="PF00069">
    <property type="entry name" value="Pkinase"/>
    <property type="match status" value="1"/>
</dbReference>
<dbReference type="PIRSF" id="PIRSF000615">
    <property type="entry name" value="TyrPK_CSF1-R"/>
    <property type="match status" value="1"/>
</dbReference>
<dbReference type="SMART" id="SM00220">
    <property type="entry name" value="S_TKc"/>
    <property type="match status" value="1"/>
</dbReference>
<dbReference type="SUPFAM" id="SSF56112">
    <property type="entry name" value="Protein kinase-like (PK-like)"/>
    <property type="match status" value="1"/>
</dbReference>
<dbReference type="PROSITE" id="PS00107">
    <property type="entry name" value="PROTEIN_KINASE_ATP"/>
    <property type="match status" value="1"/>
</dbReference>
<dbReference type="PROSITE" id="PS50011">
    <property type="entry name" value="PROTEIN_KINASE_DOM"/>
    <property type="match status" value="1"/>
</dbReference>
<dbReference type="PROSITE" id="PS00108">
    <property type="entry name" value="PROTEIN_KINASE_ST"/>
    <property type="match status" value="1"/>
</dbReference>
<feature type="chain" id="PRO_0000431232" description="Serine/threonine-protein kinase CDG1">
    <location>
        <begin position="1"/>
        <end position="432"/>
    </location>
</feature>
<feature type="domain" description="Protein kinase" evidence="2">
    <location>
        <begin position="74"/>
        <end position="354"/>
    </location>
</feature>
<feature type="region of interest" description="Disordered" evidence="3">
    <location>
        <begin position="15"/>
        <end position="47"/>
    </location>
</feature>
<feature type="compositionally biased region" description="Basic residues" evidence="3">
    <location>
        <begin position="15"/>
        <end position="24"/>
    </location>
</feature>
<feature type="compositionally biased region" description="Polar residues" evidence="3">
    <location>
        <begin position="25"/>
        <end position="35"/>
    </location>
</feature>
<feature type="active site" description="Proton acceptor" evidence="2">
    <location>
        <position position="200"/>
    </location>
</feature>
<feature type="binding site" evidence="2">
    <location>
        <begin position="80"/>
        <end position="88"/>
    </location>
    <ligand>
        <name>ATP</name>
        <dbReference type="ChEBI" id="CHEBI:30616"/>
    </ligand>
</feature>
<feature type="binding site" evidence="2">
    <location>
        <position position="102"/>
    </location>
    <ligand>
        <name>ATP</name>
        <dbReference type="ChEBI" id="CHEBI:30616"/>
    </ligand>
</feature>
<feature type="modified residue" description="Phosphoserine" evidence="5">
    <location>
        <position position="44"/>
    </location>
</feature>
<feature type="modified residue" description="Phosphoserine" evidence="5">
    <location>
        <position position="47"/>
    </location>
</feature>
<feature type="modified residue" description="Phosphotyrosine" evidence="1">
    <location>
        <position position="147"/>
    </location>
</feature>
<feature type="modified residue" description="Phosphoserine" evidence="1">
    <location>
        <position position="204"/>
    </location>
</feature>
<feature type="modified residue" description="Phosphoserine" evidence="5">
    <location>
        <position position="234"/>
    </location>
</feature>
<feature type="modified residue" description="Phosphothreonine" evidence="1">
    <location>
        <position position="235"/>
    </location>
</feature>
<feature type="modified residue" description="Phosphothreonine" evidence="1">
    <location>
        <position position="240"/>
    </location>
</feature>
<feature type="modified residue" description="Phosphotyrosine" evidence="1">
    <location>
        <position position="248"/>
    </location>
</feature>
<feature type="lipid moiety-binding region" description="S-palmitoyl cysteine" evidence="7">
    <location>
        <position position="4"/>
    </location>
</feature>
<feature type="lipid moiety-binding region" description="S-palmitoyl cysteine" evidence="7">
    <location>
        <position position="6"/>
    </location>
</feature>
<feature type="mutagenesis site" description="Loss of plasma membrane localization; when associated with Ala-6." evidence="5">
    <original>C</original>
    <variation>A</variation>
    <location>
        <position position="4"/>
    </location>
</feature>
<feature type="mutagenesis site" description="Loss of plasma membrane localization; when associated with Ala-4." evidence="5">
    <original>C</original>
    <variation>A</variation>
    <location>
        <position position="6"/>
    </location>
</feature>
<feature type="mutagenesis site" description="Loss of kinase activity." evidence="5">
    <original>Y</original>
    <variation>G</variation>
    <location>
        <position position="147"/>
    </location>
</feature>
<feature type="sequence conflict" description="In Ref. 1; BAC67214." ref="1">
    <original>T</original>
    <variation>A</variation>
    <location>
        <position position="38"/>
    </location>
</feature>
<feature type="sequence conflict" description="In Ref. 1; BAC67214." ref="1">
    <location>
        <position position="424"/>
    </location>
</feature>
<gene>
    <name evidence="6" type="primary">CDG1</name>
    <name evidence="9" type="ordered locus">At3g26940</name>
    <name evidence="10" type="ORF">MOJ10.2</name>
</gene>
<reference key="1">
    <citation type="journal article" date="2004" name="Plant Physiol.">
        <title>Overexpression of constitutive differential growth 1 gene, which encodes a RLCKVII-subfamily protein kinase, causes abnormal differential and elongation growth after organ differentiation in Arabidopsis.</title>
        <authorList>
            <person name="Muto H."/>
            <person name="Yabe N."/>
            <person name="Asami T."/>
            <person name="Hasunuma K."/>
            <person name="Yamamoto K.T."/>
        </authorList>
    </citation>
    <scope>NUCLEOTIDE SEQUENCE [MRNA]</scope>
    <scope>TISSUE SPECIFICITY</scope>
    <scope>DISRUPTION PHENOTYPE</scope>
    <source>
        <strain>cv. Columbia</strain>
    </source>
</reference>
<reference key="2">
    <citation type="journal article" date="2000" name="DNA Res.">
        <title>Structural analysis of Arabidopsis thaliana chromosome 3. I. Sequence features of the regions of 4,504,864 bp covered by sixty P1 and TAC clones.</title>
        <authorList>
            <person name="Sato S."/>
            <person name="Nakamura Y."/>
            <person name="Kaneko T."/>
            <person name="Katoh T."/>
            <person name="Asamizu E."/>
            <person name="Tabata S."/>
        </authorList>
    </citation>
    <scope>NUCLEOTIDE SEQUENCE [LARGE SCALE GENOMIC DNA]</scope>
    <source>
        <strain>cv. Columbia</strain>
    </source>
</reference>
<reference key="3">
    <citation type="journal article" date="2017" name="Plant J.">
        <title>Araport11: a complete reannotation of the Arabidopsis thaliana reference genome.</title>
        <authorList>
            <person name="Cheng C.Y."/>
            <person name="Krishnakumar V."/>
            <person name="Chan A.P."/>
            <person name="Thibaud-Nissen F."/>
            <person name="Schobel S."/>
            <person name="Town C.D."/>
        </authorList>
    </citation>
    <scope>GENOME REANNOTATION</scope>
    <source>
        <strain>cv. Columbia</strain>
    </source>
</reference>
<reference key="4">
    <citation type="journal article" date="2006" name="Plant Biotechnol. J.">
        <title>Simultaneous high-throughput recombinational cloning of open reading frames in closed and open configurations.</title>
        <authorList>
            <person name="Underwood B.A."/>
            <person name="Vanderhaeghen R."/>
            <person name="Whitford R."/>
            <person name="Town C.D."/>
            <person name="Hilson P."/>
        </authorList>
    </citation>
    <scope>NUCLEOTIDE SEQUENCE [LARGE SCALE MRNA]</scope>
    <source>
        <strain>cv. Columbia</strain>
    </source>
</reference>
<reference key="5">
    <citation type="journal article" date="2011" name="Mol. Cell">
        <title>The CDG1 kinase mediates brassinosteroid signal transduction from BRI1 receptor kinase to BSU1 phosphatase and GSK3-like kinase BIN2.</title>
        <authorList>
            <person name="Kim T.W."/>
            <person name="Guan S."/>
            <person name="Burlingame A.L."/>
            <person name="Wang Z.Y."/>
        </authorList>
    </citation>
    <scope>FUNCTION</scope>
    <scope>ACTIVITY REGULATION</scope>
    <scope>INTERACTION WITH BSU1; BSL1 AND BRI1</scope>
    <scope>SUBCELLULAR LOCATION</scope>
    <scope>TISSUE SPECIFICITY</scope>
    <scope>PHOSPHORYLATION AT SER-44; SER-47 AND SER-234</scope>
    <scope>PALMITOYLATION AT CYS-4 AND CYS-6</scope>
    <scope>MUTAGENESIS OF CYS-4; CYS-6 AND TYR-147</scope>
    <scope>DISRUPTION PHENOTYPE</scope>
</reference>
<evidence type="ECO:0000250" key="1">
    <source>
        <dbReference type="UniProtKB" id="O48814"/>
    </source>
</evidence>
<evidence type="ECO:0000255" key="2">
    <source>
        <dbReference type="PROSITE-ProRule" id="PRU00159"/>
    </source>
</evidence>
<evidence type="ECO:0000256" key="3">
    <source>
        <dbReference type="SAM" id="MobiDB-lite"/>
    </source>
</evidence>
<evidence type="ECO:0000269" key="4">
    <source>
    </source>
</evidence>
<evidence type="ECO:0000269" key="5">
    <source>
    </source>
</evidence>
<evidence type="ECO:0000303" key="6">
    <source>
    </source>
</evidence>
<evidence type="ECO:0000303" key="7">
    <source>
    </source>
</evidence>
<evidence type="ECO:0000305" key="8"/>
<evidence type="ECO:0000312" key="9">
    <source>
        <dbReference type="Araport" id="AT3G26940"/>
    </source>
</evidence>
<evidence type="ECO:0000312" key="10">
    <source>
        <dbReference type="EMBL" id="BAB01076.1"/>
    </source>
</evidence>
<name>CDG1_ARATH</name>
<sequence length="432" mass="48507">MVSCLCFRPSRKTKLKDKSHKRSIRNQTSSSSAQPAGTAKEVDSSSSQTVVQDSSRYRCQIFSYRELAIATNSFRNESLIGRGGFGTVYKGRLSTGQNIAVKMLDQSGIQGDKEFLVEVLMLSLLHHRNLVHLFGYCAEGDQRLVVYEYMPLGSVEDHLYDLSEGQEALDWKTRMKIALGAAKGLAFLHNEAQPPVIYRDLKTSNILLDHDYKPKLSDFGLAKFGPSDDMSHVSTRVMGTHGYCAPEYANTGKLTLKSDIYSFGVVLLELISGRKALMPSSECVGNQSRYLVHWARPLFLNGRIRQIVDPRLARKGGFSNILLYRGIEVAFLCLAEEANARPSISQVVECLKYIIDHTIRKERRTRRRLLGGNKDGAGTSRSPDETMMRMLEEEEEYVTSEEAIERRRVIVDDARTWAGMNRRGATPPTPTP</sequence>
<proteinExistence type="evidence at protein level"/>
<protein>
    <recommendedName>
        <fullName evidence="8">Serine/threonine-protein kinase CDG1</fullName>
        <ecNumber evidence="5">2.7.11.1</ecNumber>
    </recommendedName>
    <alternativeName>
        <fullName evidence="6">Protein CONSTITUTIVE DIFFERENTIAL GROWTH 1</fullName>
    </alternativeName>
</protein>
<organism>
    <name type="scientific">Arabidopsis thaliana</name>
    <name type="common">Mouse-ear cress</name>
    <dbReference type="NCBI Taxonomy" id="3702"/>
    <lineage>
        <taxon>Eukaryota</taxon>
        <taxon>Viridiplantae</taxon>
        <taxon>Streptophyta</taxon>
        <taxon>Embryophyta</taxon>
        <taxon>Tracheophyta</taxon>
        <taxon>Spermatophyta</taxon>
        <taxon>Magnoliopsida</taxon>
        <taxon>eudicotyledons</taxon>
        <taxon>Gunneridae</taxon>
        <taxon>Pentapetalae</taxon>
        <taxon>rosids</taxon>
        <taxon>malvids</taxon>
        <taxon>Brassicales</taxon>
        <taxon>Brassicaceae</taxon>
        <taxon>Camelineae</taxon>
        <taxon>Arabidopsis</taxon>
    </lineage>
</organism>
<accession>Q9LSE1</accession>
<accession>A0MEY6</accession>
<accession>Q84UJ3</accession>
<keyword id="KW-0067">ATP-binding</keyword>
<keyword id="KW-1070">Brassinosteroid signaling pathway</keyword>
<keyword id="KW-1003">Cell membrane</keyword>
<keyword id="KW-0418">Kinase</keyword>
<keyword id="KW-0449">Lipoprotein</keyword>
<keyword id="KW-0472">Membrane</keyword>
<keyword id="KW-0547">Nucleotide-binding</keyword>
<keyword id="KW-0564">Palmitate</keyword>
<keyword id="KW-0597">Phosphoprotein</keyword>
<keyword id="KW-0675">Receptor</keyword>
<keyword id="KW-1185">Reference proteome</keyword>
<keyword id="KW-0723">Serine/threonine-protein kinase</keyword>
<keyword id="KW-0808">Transferase</keyword>